<dbReference type="EMBL" id="AM180252">
    <property type="protein sequence ID" value="CAJ54434.1"/>
    <property type="molecule type" value="Genomic_DNA"/>
</dbReference>
<dbReference type="RefSeq" id="WP_011526463.1">
    <property type="nucleotide sequence ID" value="NC_008011.1"/>
</dbReference>
<dbReference type="SMR" id="Q1MRE2"/>
<dbReference type="STRING" id="363253.LI0378"/>
<dbReference type="KEGG" id="lip:LI0378"/>
<dbReference type="eggNOG" id="COG0264">
    <property type="taxonomic scope" value="Bacteria"/>
</dbReference>
<dbReference type="HOGENOM" id="CLU_047155_0_2_7"/>
<dbReference type="OrthoDB" id="9808348at2"/>
<dbReference type="Proteomes" id="UP000002430">
    <property type="component" value="Chromosome"/>
</dbReference>
<dbReference type="GO" id="GO:0005737">
    <property type="term" value="C:cytoplasm"/>
    <property type="evidence" value="ECO:0007669"/>
    <property type="project" value="UniProtKB-SubCell"/>
</dbReference>
<dbReference type="GO" id="GO:0003746">
    <property type="term" value="F:translation elongation factor activity"/>
    <property type="evidence" value="ECO:0007669"/>
    <property type="project" value="UniProtKB-UniRule"/>
</dbReference>
<dbReference type="CDD" id="cd14275">
    <property type="entry name" value="UBA_EF-Ts"/>
    <property type="match status" value="1"/>
</dbReference>
<dbReference type="FunFam" id="1.10.8.10:FF:000001">
    <property type="entry name" value="Elongation factor Ts"/>
    <property type="match status" value="1"/>
</dbReference>
<dbReference type="Gene3D" id="1.10.286.20">
    <property type="match status" value="1"/>
</dbReference>
<dbReference type="Gene3D" id="1.10.8.10">
    <property type="entry name" value="DNA helicase RuvA subunit, C-terminal domain"/>
    <property type="match status" value="1"/>
</dbReference>
<dbReference type="Gene3D" id="3.30.479.20">
    <property type="entry name" value="Elongation factor Ts, dimerisation domain"/>
    <property type="match status" value="2"/>
</dbReference>
<dbReference type="HAMAP" id="MF_00050">
    <property type="entry name" value="EF_Ts"/>
    <property type="match status" value="1"/>
</dbReference>
<dbReference type="InterPro" id="IPR036402">
    <property type="entry name" value="EF-Ts_dimer_sf"/>
</dbReference>
<dbReference type="InterPro" id="IPR001816">
    <property type="entry name" value="Transl_elong_EFTs/EF1B"/>
</dbReference>
<dbReference type="InterPro" id="IPR014039">
    <property type="entry name" value="Transl_elong_EFTs/EF1B_dimer"/>
</dbReference>
<dbReference type="InterPro" id="IPR018101">
    <property type="entry name" value="Transl_elong_Ts_CS"/>
</dbReference>
<dbReference type="InterPro" id="IPR009060">
    <property type="entry name" value="UBA-like_sf"/>
</dbReference>
<dbReference type="NCBIfam" id="TIGR00116">
    <property type="entry name" value="tsf"/>
    <property type="match status" value="1"/>
</dbReference>
<dbReference type="PANTHER" id="PTHR11741">
    <property type="entry name" value="ELONGATION FACTOR TS"/>
    <property type="match status" value="1"/>
</dbReference>
<dbReference type="PANTHER" id="PTHR11741:SF0">
    <property type="entry name" value="ELONGATION FACTOR TS, MITOCHONDRIAL"/>
    <property type="match status" value="1"/>
</dbReference>
<dbReference type="Pfam" id="PF00889">
    <property type="entry name" value="EF_TS"/>
    <property type="match status" value="1"/>
</dbReference>
<dbReference type="SUPFAM" id="SSF54713">
    <property type="entry name" value="Elongation factor Ts (EF-Ts), dimerisation domain"/>
    <property type="match status" value="2"/>
</dbReference>
<dbReference type="SUPFAM" id="SSF46934">
    <property type="entry name" value="UBA-like"/>
    <property type="match status" value="1"/>
</dbReference>
<dbReference type="PROSITE" id="PS01126">
    <property type="entry name" value="EF_TS_1"/>
    <property type="match status" value="1"/>
</dbReference>
<comment type="function">
    <text evidence="1">Associates with the EF-Tu.GDP complex and induces the exchange of GDP to GTP. It remains bound to the aminoacyl-tRNA.EF-Tu.GTP complex up to the GTP hydrolysis stage on the ribosome.</text>
</comment>
<comment type="subcellular location">
    <subcellularLocation>
        <location evidence="1">Cytoplasm</location>
    </subcellularLocation>
</comment>
<comment type="similarity">
    <text evidence="1">Belongs to the EF-Ts family.</text>
</comment>
<name>EFTS_LAWIP</name>
<gene>
    <name evidence="1" type="primary">tsf</name>
    <name type="ordered locus">LI0378</name>
</gene>
<evidence type="ECO:0000255" key="1">
    <source>
        <dbReference type="HAMAP-Rule" id="MF_00050"/>
    </source>
</evidence>
<reference key="1">
    <citation type="submission" date="2005-11" db="EMBL/GenBank/DDBJ databases">
        <title>The complete genome sequence of Lawsonia intracellularis: the causative agent of proliferative enteropathy.</title>
        <authorList>
            <person name="Kaur K."/>
            <person name="Zhang Q."/>
            <person name="Beckler D."/>
            <person name="Munir S."/>
            <person name="Li L."/>
            <person name="Kinsley K."/>
            <person name="Herron L."/>
            <person name="Peterson A."/>
            <person name="May B."/>
            <person name="Singh S."/>
            <person name="Gebhart C."/>
            <person name="Kapur V."/>
        </authorList>
    </citation>
    <scope>NUCLEOTIDE SEQUENCE [LARGE SCALE GENOMIC DNA]</scope>
    <source>
        <strain>PHE/MN1-00</strain>
    </source>
</reference>
<sequence>MSISASMVKTLRERTGAGMMDCKQALEEANGDMEKAIDWLRQRGLSKASKKAGRATTEGLIGCQVLPGSTSAVLVEVMCETDFVSRDEVFKKFVDDIVSQLVANFHNNDVDLLDQPSGNKNLSIRDLLNETIATIGENIVIGRSIKMELTPGKNGMIGHYVHTNGKIAVLVELATETKETASSPKFQELAKNIAMQIAATAPLALNSESLDPLKIDREREVYRQKALEEGKPENMIEKIVEGAVKKYLKEVCLLDQPYIRDDKLSIAELIKKVSNEIGEPISIIEFVRIQLGEE</sequence>
<organism>
    <name type="scientific">Lawsonia intracellularis (strain PHE/MN1-00)</name>
    <dbReference type="NCBI Taxonomy" id="363253"/>
    <lineage>
        <taxon>Bacteria</taxon>
        <taxon>Pseudomonadati</taxon>
        <taxon>Thermodesulfobacteriota</taxon>
        <taxon>Desulfovibrionia</taxon>
        <taxon>Desulfovibrionales</taxon>
        <taxon>Desulfovibrionaceae</taxon>
        <taxon>Lawsonia</taxon>
    </lineage>
</organism>
<accession>Q1MRE2</accession>
<protein>
    <recommendedName>
        <fullName evidence="1">Elongation factor Ts</fullName>
        <shortName evidence="1">EF-Ts</shortName>
    </recommendedName>
</protein>
<proteinExistence type="inferred from homology"/>
<feature type="chain" id="PRO_1000057356" description="Elongation factor Ts">
    <location>
        <begin position="1"/>
        <end position="294"/>
    </location>
</feature>
<feature type="region of interest" description="Involved in Mg(2+) ion dislocation from EF-Tu" evidence="1">
    <location>
        <begin position="81"/>
        <end position="84"/>
    </location>
</feature>
<keyword id="KW-0963">Cytoplasm</keyword>
<keyword id="KW-0251">Elongation factor</keyword>
<keyword id="KW-0648">Protein biosynthesis</keyword>
<keyword id="KW-1185">Reference proteome</keyword>